<reference key="1">
    <citation type="journal article" date="2002" name="Nucleic Acids Res.">
        <title>Genome sequence of Shigella flexneri 2a: insights into pathogenicity through comparison with genomes of Escherichia coli K12 and O157.</title>
        <authorList>
            <person name="Jin Q."/>
            <person name="Yuan Z."/>
            <person name="Xu J."/>
            <person name="Wang Y."/>
            <person name="Shen Y."/>
            <person name="Lu W."/>
            <person name="Wang J."/>
            <person name="Liu H."/>
            <person name="Yang J."/>
            <person name="Yang F."/>
            <person name="Zhang X."/>
            <person name="Zhang J."/>
            <person name="Yang G."/>
            <person name="Wu H."/>
            <person name="Qu D."/>
            <person name="Dong J."/>
            <person name="Sun L."/>
            <person name="Xue Y."/>
            <person name="Zhao A."/>
            <person name="Gao Y."/>
            <person name="Zhu J."/>
            <person name="Kan B."/>
            <person name="Ding K."/>
            <person name="Chen S."/>
            <person name="Cheng H."/>
            <person name="Yao Z."/>
            <person name="He B."/>
            <person name="Chen R."/>
            <person name="Ma D."/>
            <person name="Qiang B."/>
            <person name="Wen Y."/>
            <person name="Hou Y."/>
            <person name="Yu J."/>
        </authorList>
    </citation>
    <scope>NUCLEOTIDE SEQUENCE [LARGE SCALE GENOMIC DNA]</scope>
    <source>
        <strain>301 / Serotype 2a</strain>
    </source>
</reference>
<reference key="2">
    <citation type="journal article" date="2003" name="Infect. Immun.">
        <title>Complete genome sequence and comparative genomics of Shigella flexneri serotype 2a strain 2457T.</title>
        <authorList>
            <person name="Wei J."/>
            <person name="Goldberg M.B."/>
            <person name="Burland V."/>
            <person name="Venkatesan M.M."/>
            <person name="Deng W."/>
            <person name="Fournier G."/>
            <person name="Mayhew G.F."/>
            <person name="Plunkett G. III"/>
            <person name="Rose D.J."/>
            <person name="Darling A."/>
            <person name="Mau B."/>
            <person name="Perna N.T."/>
            <person name="Payne S.M."/>
            <person name="Runyen-Janecky L.J."/>
            <person name="Zhou S."/>
            <person name="Schwartz D.C."/>
            <person name="Blattner F.R."/>
        </authorList>
    </citation>
    <scope>NUCLEOTIDE SEQUENCE [LARGE SCALE GENOMIC DNA]</scope>
    <source>
        <strain>ATCC 700930 / 2457T / Serotype 2a</strain>
    </source>
</reference>
<organism>
    <name type="scientific">Shigella flexneri</name>
    <dbReference type="NCBI Taxonomy" id="623"/>
    <lineage>
        <taxon>Bacteria</taxon>
        <taxon>Pseudomonadati</taxon>
        <taxon>Pseudomonadota</taxon>
        <taxon>Gammaproteobacteria</taxon>
        <taxon>Enterobacterales</taxon>
        <taxon>Enterobacteriaceae</taxon>
        <taxon>Shigella</taxon>
    </lineage>
</organism>
<keyword id="KW-0012">Acyltransferase</keyword>
<keyword id="KW-0963">Cytoplasm</keyword>
<keyword id="KW-1185">Reference proteome</keyword>
<keyword id="KW-0808">Transferase</keyword>
<comment type="function">
    <text evidence="1">Involved in acetate metabolism.</text>
</comment>
<comment type="catalytic activity">
    <reaction>
        <text>acetyl-CoA + phosphate = acetyl phosphate + CoA</text>
        <dbReference type="Rhea" id="RHEA:19521"/>
        <dbReference type="ChEBI" id="CHEBI:22191"/>
        <dbReference type="ChEBI" id="CHEBI:43474"/>
        <dbReference type="ChEBI" id="CHEBI:57287"/>
        <dbReference type="ChEBI" id="CHEBI:57288"/>
        <dbReference type="EC" id="2.3.1.8"/>
    </reaction>
</comment>
<comment type="pathway">
    <text>Metabolic intermediate biosynthesis; acetyl-CoA biosynthesis; acetyl-CoA from acetate: step 2/2.</text>
</comment>
<comment type="subunit">
    <text evidence="1">Homohexamer.</text>
</comment>
<comment type="subcellular location">
    <subcellularLocation>
        <location evidence="2">Cytoplasm</location>
    </subcellularLocation>
</comment>
<comment type="domain">
    <text evidence="1">The N-terminal region seems to be important for proper quaternary structure. The C-terminal region contains the substrate-binding site (By similarity).</text>
</comment>
<comment type="similarity">
    <text evidence="2">In the N-terminal section; belongs to the CobB/CobQ family.</text>
</comment>
<comment type="similarity">
    <text evidence="2">In the C-terminal section; belongs to the phosphate acetyltransferase and butyryltransferase family.</text>
</comment>
<evidence type="ECO:0000250" key="1"/>
<evidence type="ECO:0000305" key="2"/>
<proteinExistence type="inferred from homology"/>
<protein>
    <recommendedName>
        <fullName>Phosphate acetyltransferase</fullName>
        <ecNumber>2.3.1.8</ecNumber>
    </recommendedName>
    <alternativeName>
        <fullName>Phosphotransacetylase</fullName>
    </alternativeName>
</protein>
<dbReference type="EC" id="2.3.1.8"/>
<dbReference type="EMBL" id="AE005674">
    <property type="protein sequence ID" value="AAN43886.1"/>
    <property type="molecule type" value="Genomic_DNA"/>
</dbReference>
<dbReference type="EMBL" id="AE014073">
    <property type="protein sequence ID" value="AAP17704.1"/>
    <property type="molecule type" value="Genomic_DNA"/>
</dbReference>
<dbReference type="RefSeq" id="NP_708179.1">
    <property type="nucleotide sequence ID" value="NC_004337.2"/>
</dbReference>
<dbReference type="RefSeq" id="WP_000086722.1">
    <property type="nucleotide sequence ID" value="NZ_WPGW01000016.1"/>
</dbReference>
<dbReference type="SMR" id="P0A9M9"/>
<dbReference type="STRING" id="198214.SF2373"/>
<dbReference type="PaxDb" id="198214-SF2373"/>
<dbReference type="GeneID" id="1027244"/>
<dbReference type="GeneID" id="93774877"/>
<dbReference type="KEGG" id="sfl:SF2373"/>
<dbReference type="KEGG" id="sfx:S2508"/>
<dbReference type="PATRIC" id="fig|198214.7.peg.2840"/>
<dbReference type="HOGENOM" id="CLU_019723_2_2_6"/>
<dbReference type="UniPathway" id="UPA00340">
    <property type="reaction ID" value="UER00459"/>
</dbReference>
<dbReference type="Proteomes" id="UP000001006">
    <property type="component" value="Chromosome"/>
</dbReference>
<dbReference type="Proteomes" id="UP000002673">
    <property type="component" value="Chromosome"/>
</dbReference>
<dbReference type="GO" id="GO:0005737">
    <property type="term" value="C:cytoplasm"/>
    <property type="evidence" value="ECO:0007669"/>
    <property type="project" value="UniProtKB-SubCell"/>
</dbReference>
<dbReference type="GO" id="GO:0008959">
    <property type="term" value="F:phosphate acetyltransferase activity"/>
    <property type="evidence" value="ECO:0007669"/>
    <property type="project" value="UniProtKB-EC"/>
</dbReference>
<dbReference type="GO" id="GO:0006085">
    <property type="term" value="P:acetyl-CoA biosynthetic process"/>
    <property type="evidence" value="ECO:0007669"/>
    <property type="project" value="UniProtKB-UniPathway"/>
</dbReference>
<dbReference type="CDD" id="cd03109">
    <property type="entry name" value="DTBS"/>
    <property type="match status" value="1"/>
</dbReference>
<dbReference type="FunFam" id="3.40.1390.20:FF:000001">
    <property type="entry name" value="Phosphate acetyltransferase"/>
    <property type="match status" value="1"/>
</dbReference>
<dbReference type="FunFam" id="3.40.50.10750:FF:000001">
    <property type="entry name" value="Phosphate acetyltransferase"/>
    <property type="match status" value="1"/>
</dbReference>
<dbReference type="FunFam" id="3.40.50.10950:FF:000001">
    <property type="entry name" value="Phosphate acetyltransferase"/>
    <property type="match status" value="1"/>
</dbReference>
<dbReference type="FunFam" id="3.40.50.300:FF:000445">
    <property type="entry name" value="Phosphate acetyltransferase"/>
    <property type="match status" value="1"/>
</dbReference>
<dbReference type="Gene3D" id="3.40.50.10950">
    <property type="match status" value="1"/>
</dbReference>
<dbReference type="Gene3D" id="3.40.1390.20">
    <property type="entry name" value="HprK N-terminal domain-like"/>
    <property type="match status" value="1"/>
</dbReference>
<dbReference type="Gene3D" id="3.40.50.10750">
    <property type="entry name" value="Isocitrate/Isopropylmalate dehydrogenase-like"/>
    <property type="match status" value="1"/>
</dbReference>
<dbReference type="Gene3D" id="3.40.50.300">
    <property type="entry name" value="P-loop containing nucleotide triphosphate hydrolases"/>
    <property type="match status" value="1"/>
</dbReference>
<dbReference type="InterPro" id="IPR010766">
    <property type="entry name" value="DRTGG"/>
</dbReference>
<dbReference type="InterPro" id="IPR016475">
    <property type="entry name" value="P-Actrans_bac"/>
</dbReference>
<dbReference type="InterPro" id="IPR027417">
    <property type="entry name" value="P-loop_NTPase"/>
</dbReference>
<dbReference type="InterPro" id="IPR004614">
    <property type="entry name" value="P_AcTrfase"/>
</dbReference>
<dbReference type="InterPro" id="IPR042113">
    <property type="entry name" value="P_AcTrfase_dom1"/>
</dbReference>
<dbReference type="InterPro" id="IPR042112">
    <property type="entry name" value="P_AcTrfase_dom2"/>
</dbReference>
<dbReference type="InterPro" id="IPR050500">
    <property type="entry name" value="Phos_Acetyltrans/Butyryltrans"/>
</dbReference>
<dbReference type="InterPro" id="IPR002505">
    <property type="entry name" value="PTA_PTB"/>
</dbReference>
<dbReference type="InterPro" id="IPR028979">
    <property type="entry name" value="Ser_kin/Pase_Hpr-like_N_sf"/>
</dbReference>
<dbReference type="NCBIfam" id="NF004167">
    <property type="entry name" value="PRK05632.1"/>
    <property type="match status" value="1"/>
</dbReference>
<dbReference type="NCBIfam" id="NF007233">
    <property type="entry name" value="PRK09653.1"/>
    <property type="match status" value="1"/>
</dbReference>
<dbReference type="NCBIfam" id="TIGR00651">
    <property type="entry name" value="pta"/>
    <property type="match status" value="1"/>
</dbReference>
<dbReference type="PANTHER" id="PTHR43356">
    <property type="entry name" value="PHOSPHATE ACETYLTRANSFERASE"/>
    <property type="match status" value="1"/>
</dbReference>
<dbReference type="PANTHER" id="PTHR43356:SF3">
    <property type="entry name" value="PHOSPHATE ACETYLTRANSFERASE"/>
    <property type="match status" value="1"/>
</dbReference>
<dbReference type="Pfam" id="PF13500">
    <property type="entry name" value="AAA_26"/>
    <property type="match status" value="1"/>
</dbReference>
<dbReference type="Pfam" id="PF07085">
    <property type="entry name" value="DRTGG"/>
    <property type="match status" value="1"/>
</dbReference>
<dbReference type="Pfam" id="PF01515">
    <property type="entry name" value="PTA_PTB"/>
    <property type="match status" value="1"/>
</dbReference>
<dbReference type="PIRSF" id="PIRSF006107">
    <property type="entry name" value="PhpActrans_proteobac"/>
    <property type="match status" value="1"/>
</dbReference>
<dbReference type="SUPFAM" id="SSF75138">
    <property type="entry name" value="HprK N-terminal domain-like"/>
    <property type="match status" value="1"/>
</dbReference>
<dbReference type="SUPFAM" id="SSF53659">
    <property type="entry name" value="Isocitrate/Isopropylmalate dehydrogenase-like"/>
    <property type="match status" value="1"/>
</dbReference>
<dbReference type="SUPFAM" id="SSF52540">
    <property type="entry name" value="P-loop containing nucleoside triphosphate hydrolases"/>
    <property type="match status" value="1"/>
</dbReference>
<sequence>MSRIIMLIPTGTSVGLTSVSLGVIRAMERKGVRLSVFKPIAQPRTGGDAPDQTTTIVRANSSTTTAAEPLKMSYVEGLLSSNQKDVLMEEIVANYHANTKDAEVVLVEGLVPTRKHQFAQSLNYEIAKTLNAEIVFVMSQGTDTPEQLKERIELTRNSFGGAKNTNITGVIVNKLNAPVDEQGRTRPDLSEIFDDSSKAKVNNVDPAKLQESSPLPVLGAVPWSFDLIATRAIDMARHLNATIINEGDINTRRVKSVTFCARSIPHMLEHFRAGSLLVTSADRPDVLVAACLAAMNGVEIGALLLTGGYEMDARISKLCERAFATGLPVFMVNTNTWQTSLSLQSFNLEVPVDDHERIEKVQEYVANYINADWIESLTATSERSRRLSPPAFRYQLTELARKAGKRIVLPEGDEPRTVKAAAICAERGIATCVLLGNPAEINRVAASQGVELGAGIEIVDPEVVRESYVGRLVELRKNKGMTETVAREQLEDNVVLGTLMLEQDEVDGLVSGAVHTTANTIRPPLQLIKTAPGSSLVSSVFFMLLPEQVYVYGDCAINPDPTAEQLAEIAIQSADSAAAFGIEPRVAMLSYSTGTSGAGSDVEKVREATRLAQEKRPDLMIDGPLQYDAAVMADVAKSKAPNSPVAGRATVFIFPDLNTGNTTYKAVQRSADLISIGPMLQGMRKPVNDLSRGALVDDIVYTIALTAIQSAQQQ</sequence>
<name>PTA_SHIFL</name>
<accession>P0A9M9</accession>
<accession>P39184</accession>
<accession>P78091</accession>
<accession>P78189</accession>
<accession>P78190</accession>
<accession>Q9EUP2</accession>
<feature type="initiator methionine" description="Removed" evidence="1">
    <location>
        <position position="1"/>
    </location>
</feature>
<feature type="chain" id="PRO_0000179139" description="Phosphate acetyltransferase">
    <location>
        <begin position="2"/>
        <end position="714"/>
    </location>
</feature>
<feature type="region of interest" description="Phosphate acetyltransferase">
    <location>
        <begin position="391"/>
        <end position="714"/>
    </location>
</feature>
<gene>
    <name type="primary">pta</name>
    <name type="ordered locus">SF2373</name>
    <name type="ordered locus">S2508</name>
</gene>